<evidence type="ECO:0000255" key="1">
    <source>
        <dbReference type="HAMAP-Rule" id="MF_01155"/>
    </source>
</evidence>
<gene>
    <name evidence="1" type="primary">cbpM</name>
    <name type="ordered locus">ECIAI1_1042</name>
</gene>
<name>CBPM_ECO8A</name>
<reference key="1">
    <citation type="journal article" date="2009" name="PLoS Genet.">
        <title>Organised genome dynamics in the Escherichia coli species results in highly diverse adaptive paths.</title>
        <authorList>
            <person name="Touchon M."/>
            <person name="Hoede C."/>
            <person name="Tenaillon O."/>
            <person name="Barbe V."/>
            <person name="Baeriswyl S."/>
            <person name="Bidet P."/>
            <person name="Bingen E."/>
            <person name="Bonacorsi S."/>
            <person name="Bouchier C."/>
            <person name="Bouvet O."/>
            <person name="Calteau A."/>
            <person name="Chiapello H."/>
            <person name="Clermont O."/>
            <person name="Cruveiller S."/>
            <person name="Danchin A."/>
            <person name="Diard M."/>
            <person name="Dossat C."/>
            <person name="Karoui M.E."/>
            <person name="Frapy E."/>
            <person name="Garry L."/>
            <person name="Ghigo J.M."/>
            <person name="Gilles A.M."/>
            <person name="Johnson J."/>
            <person name="Le Bouguenec C."/>
            <person name="Lescat M."/>
            <person name="Mangenot S."/>
            <person name="Martinez-Jehanne V."/>
            <person name="Matic I."/>
            <person name="Nassif X."/>
            <person name="Oztas S."/>
            <person name="Petit M.A."/>
            <person name="Pichon C."/>
            <person name="Rouy Z."/>
            <person name="Ruf C.S."/>
            <person name="Schneider D."/>
            <person name="Tourret J."/>
            <person name="Vacherie B."/>
            <person name="Vallenet D."/>
            <person name="Medigue C."/>
            <person name="Rocha E.P.C."/>
            <person name="Denamur E."/>
        </authorList>
    </citation>
    <scope>NUCLEOTIDE SEQUENCE [LARGE SCALE GENOMIC DNA]</scope>
    <source>
        <strain>IAI1</strain>
    </source>
</reference>
<dbReference type="EMBL" id="CU928160">
    <property type="protein sequence ID" value="CAQ97906.1"/>
    <property type="molecule type" value="Genomic_DNA"/>
</dbReference>
<dbReference type="RefSeq" id="WP_000024560.1">
    <property type="nucleotide sequence ID" value="NC_011741.1"/>
</dbReference>
<dbReference type="SMR" id="B7M8Y2"/>
<dbReference type="GeneID" id="93776412"/>
<dbReference type="KEGG" id="ecr:ECIAI1_1042"/>
<dbReference type="HOGENOM" id="CLU_144710_3_1_6"/>
<dbReference type="FunFam" id="1.10.1660.10:FF:000006">
    <property type="entry name" value="Chaperone modulatory protein CbpM"/>
    <property type="match status" value="1"/>
</dbReference>
<dbReference type="Gene3D" id="1.10.1660.10">
    <property type="match status" value="1"/>
</dbReference>
<dbReference type="HAMAP" id="MF_01155">
    <property type="entry name" value="CbpM"/>
    <property type="match status" value="1"/>
</dbReference>
<dbReference type="InterPro" id="IPR022835">
    <property type="entry name" value="CbpM"/>
</dbReference>
<dbReference type="NCBIfam" id="NF007617">
    <property type="entry name" value="PRK10265.1"/>
    <property type="match status" value="1"/>
</dbReference>
<dbReference type="Pfam" id="PF13591">
    <property type="entry name" value="MerR_2"/>
    <property type="match status" value="1"/>
</dbReference>
<sequence length="101" mass="11512">MANVTVTFTITEFCLHTGISEEELNEIVGLGVVEPREIQETTWVFDDHAAIVVQRAVRLRHELALDWPGIAVALTLMDDIAHLKQENRLLRQRLSRFVAHP</sequence>
<feature type="chain" id="PRO_1000137769" description="Chaperone modulatory protein CbpM">
    <location>
        <begin position="1"/>
        <end position="101"/>
    </location>
</feature>
<comment type="function">
    <text evidence="1">Interacts with CbpA and inhibits both the DnaJ-like co-chaperone activity and the DNA binding activity of CbpA. Together with CbpA, modulates the activity of the DnaK chaperone system. Does not inhibit the co-chaperone activity of DnaJ.</text>
</comment>
<comment type="similarity">
    <text evidence="1">Belongs to the CbpM family.</text>
</comment>
<accession>B7M8Y2</accession>
<proteinExistence type="inferred from homology"/>
<protein>
    <recommendedName>
        <fullName evidence="1">Chaperone modulatory protein CbpM</fullName>
    </recommendedName>
</protein>
<organism>
    <name type="scientific">Escherichia coli O8 (strain IAI1)</name>
    <dbReference type="NCBI Taxonomy" id="585034"/>
    <lineage>
        <taxon>Bacteria</taxon>
        <taxon>Pseudomonadati</taxon>
        <taxon>Pseudomonadota</taxon>
        <taxon>Gammaproteobacteria</taxon>
        <taxon>Enterobacterales</taxon>
        <taxon>Enterobacteriaceae</taxon>
        <taxon>Escherichia</taxon>
    </lineage>
</organism>